<comment type="function">
    <text evidence="1">Binds to 23S rRNA. Forms part of two intersubunit bridges in the 70S ribosome.</text>
</comment>
<comment type="subunit">
    <text evidence="1">Part of the 50S ribosomal subunit. Forms a cluster with proteins L3 and L19. In the 70S ribosome, L14 and L19 interact and together make contacts with the 16S rRNA in bridges B5 and B8.</text>
</comment>
<comment type="similarity">
    <text evidence="1">Belongs to the universal ribosomal protein uL14 family.</text>
</comment>
<protein>
    <recommendedName>
        <fullName evidence="1">Large ribosomal subunit protein uL14</fullName>
    </recommendedName>
    <alternativeName>
        <fullName evidence="2">50S ribosomal protein L14</fullName>
    </alternativeName>
</protein>
<accession>Q8CRG9</accession>
<name>RL14_STAES</name>
<keyword id="KW-0687">Ribonucleoprotein</keyword>
<keyword id="KW-0689">Ribosomal protein</keyword>
<keyword id="KW-0694">RNA-binding</keyword>
<keyword id="KW-0699">rRNA-binding</keyword>
<evidence type="ECO:0000255" key="1">
    <source>
        <dbReference type="HAMAP-Rule" id="MF_01367"/>
    </source>
</evidence>
<evidence type="ECO:0000305" key="2"/>
<gene>
    <name evidence="1" type="primary">rplN</name>
    <name type="ordered locus">SE_1814</name>
</gene>
<proteinExistence type="inferred from homology"/>
<sequence>MIQQETRLKVADNSGAREVLTIKVLGGSGRKTANIGDIIVCTVKNATPGGVVKKGDVVKAVVVRTKSGVRREDGSYIKFDENACVIIRDDKGPRGTRIFGPVARELREGNFMKIVSLAPEVL</sequence>
<dbReference type="EMBL" id="AE015929">
    <property type="protein sequence ID" value="AAO05455.1"/>
    <property type="molecule type" value="Genomic_DNA"/>
</dbReference>
<dbReference type="RefSeq" id="NP_765369.1">
    <property type="nucleotide sequence ID" value="NC_004461.1"/>
</dbReference>
<dbReference type="RefSeq" id="WP_001829742.1">
    <property type="nucleotide sequence ID" value="NZ_WBME01000007.1"/>
</dbReference>
<dbReference type="SMR" id="Q8CRG9"/>
<dbReference type="GeneID" id="50018083"/>
<dbReference type="KEGG" id="sep:SE_1814"/>
<dbReference type="PATRIC" id="fig|176280.10.peg.1770"/>
<dbReference type="eggNOG" id="COG0093">
    <property type="taxonomic scope" value="Bacteria"/>
</dbReference>
<dbReference type="HOGENOM" id="CLU_095071_2_1_9"/>
<dbReference type="OrthoDB" id="9806379at2"/>
<dbReference type="Proteomes" id="UP000001411">
    <property type="component" value="Chromosome"/>
</dbReference>
<dbReference type="GO" id="GO:0022625">
    <property type="term" value="C:cytosolic large ribosomal subunit"/>
    <property type="evidence" value="ECO:0007669"/>
    <property type="project" value="TreeGrafter"/>
</dbReference>
<dbReference type="GO" id="GO:0070180">
    <property type="term" value="F:large ribosomal subunit rRNA binding"/>
    <property type="evidence" value="ECO:0007669"/>
    <property type="project" value="TreeGrafter"/>
</dbReference>
<dbReference type="GO" id="GO:0003735">
    <property type="term" value="F:structural constituent of ribosome"/>
    <property type="evidence" value="ECO:0007669"/>
    <property type="project" value="InterPro"/>
</dbReference>
<dbReference type="GO" id="GO:0006412">
    <property type="term" value="P:translation"/>
    <property type="evidence" value="ECO:0007669"/>
    <property type="project" value="UniProtKB-UniRule"/>
</dbReference>
<dbReference type="CDD" id="cd00337">
    <property type="entry name" value="Ribosomal_uL14"/>
    <property type="match status" value="1"/>
</dbReference>
<dbReference type="FunFam" id="2.40.150.20:FF:000001">
    <property type="entry name" value="50S ribosomal protein L14"/>
    <property type="match status" value="1"/>
</dbReference>
<dbReference type="Gene3D" id="2.40.150.20">
    <property type="entry name" value="Ribosomal protein L14"/>
    <property type="match status" value="1"/>
</dbReference>
<dbReference type="HAMAP" id="MF_01367">
    <property type="entry name" value="Ribosomal_uL14"/>
    <property type="match status" value="1"/>
</dbReference>
<dbReference type="InterPro" id="IPR000218">
    <property type="entry name" value="Ribosomal_uL14"/>
</dbReference>
<dbReference type="InterPro" id="IPR005745">
    <property type="entry name" value="Ribosomal_uL14_bac-type"/>
</dbReference>
<dbReference type="InterPro" id="IPR019972">
    <property type="entry name" value="Ribosomal_uL14_CS"/>
</dbReference>
<dbReference type="InterPro" id="IPR036853">
    <property type="entry name" value="Ribosomal_uL14_sf"/>
</dbReference>
<dbReference type="NCBIfam" id="TIGR01067">
    <property type="entry name" value="rplN_bact"/>
    <property type="match status" value="1"/>
</dbReference>
<dbReference type="PANTHER" id="PTHR11761">
    <property type="entry name" value="50S/60S RIBOSOMAL PROTEIN L14/L23"/>
    <property type="match status" value="1"/>
</dbReference>
<dbReference type="PANTHER" id="PTHR11761:SF3">
    <property type="entry name" value="LARGE RIBOSOMAL SUBUNIT PROTEIN UL14M"/>
    <property type="match status" value="1"/>
</dbReference>
<dbReference type="Pfam" id="PF00238">
    <property type="entry name" value="Ribosomal_L14"/>
    <property type="match status" value="1"/>
</dbReference>
<dbReference type="SMART" id="SM01374">
    <property type="entry name" value="Ribosomal_L14"/>
    <property type="match status" value="1"/>
</dbReference>
<dbReference type="SUPFAM" id="SSF50193">
    <property type="entry name" value="Ribosomal protein L14"/>
    <property type="match status" value="1"/>
</dbReference>
<dbReference type="PROSITE" id="PS00049">
    <property type="entry name" value="RIBOSOMAL_L14"/>
    <property type="match status" value="1"/>
</dbReference>
<feature type="chain" id="PRO_0000224019" description="Large ribosomal subunit protein uL14">
    <location>
        <begin position="1"/>
        <end position="122"/>
    </location>
</feature>
<reference key="1">
    <citation type="journal article" date="2003" name="Mol. Microbiol.">
        <title>Genome-based analysis of virulence genes in a non-biofilm-forming Staphylococcus epidermidis strain (ATCC 12228).</title>
        <authorList>
            <person name="Zhang Y.-Q."/>
            <person name="Ren S.-X."/>
            <person name="Li H.-L."/>
            <person name="Wang Y.-X."/>
            <person name="Fu G."/>
            <person name="Yang J."/>
            <person name="Qin Z.-Q."/>
            <person name="Miao Y.-G."/>
            <person name="Wang W.-Y."/>
            <person name="Chen R.-S."/>
            <person name="Shen Y."/>
            <person name="Chen Z."/>
            <person name="Yuan Z.-H."/>
            <person name="Zhao G.-P."/>
            <person name="Qu D."/>
            <person name="Danchin A."/>
            <person name="Wen Y.-M."/>
        </authorList>
    </citation>
    <scope>NUCLEOTIDE SEQUENCE [LARGE SCALE GENOMIC DNA]</scope>
    <source>
        <strain>ATCC 12228 / FDA PCI 1200</strain>
    </source>
</reference>
<organism>
    <name type="scientific">Staphylococcus epidermidis (strain ATCC 12228 / FDA PCI 1200)</name>
    <dbReference type="NCBI Taxonomy" id="176280"/>
    <lineage>
        <taxon>Bacteria</taxon>
        <taxon>Bacillati</taxon>
        <taxon>Bacillota</taxon>
        <taxon>Bacilli</taxon>
        <taxon>Bacillales</taxon>
        <taxon>Staphylococcaceae</taxon>
        <taxon>Staphylococcus</taxon>
    </lineage>
</organism>